<sequence length="319" mass="36874">MMNSSQFSDSQTTSLHRIPTFYCCYLLQSINKKQSFYIGSTPNPVRRLRQHNGNLSNGGAYRTKREGTRPWEMVLVVYGFTSKIAALQFEHAWQHGYKTHYIPMDDRIMKNANSGRTVHHKLGLVRQLLANVYFRHMNLKVHFFSMPILDVWNLNKFNIKMGSNEISVDVSQVSQETKTNLEQASDDDDDNGACSRDERNLQLVTELYDNTVTKENEIKEIIKDILVLGERNCNLCGQCYDYTSEDDTMKMHIFICPNSTCHYEAHLNCLYEKFIEEESGIDSKNILLPNFCMCPGCLDEMSWSDFVKISTMIKNSFSN</sequence>
<accession>A7TTE6</accession>
<comment type="function">
    <text evidence="1">Catalytic subunit of the SLX1-SLX4 structure-specific endonuclease that resolves DNA secondary structures generated during DNA repair and recombination. Has endonuclease activity towards branched DNA substrates, introducing single-strand cuts in duplex DNA close to junctions with ss-DNA.</text>
</comment>
<comment type="cofactor">
    <cofactor evidence="1">
        <name>a divalent metal cation</name>
        <dbReference type="ChEBI" id="CHEBI:60240"/>
    </cofactor>
</comment>
<comment type="subunit">
    <text evidence="1">Forms a heterodimer with SLX4.</text>
</comment>
<comment type="subcellular location">
    <subcellularLocation>
        <location evidence="1">Nucleus</location>
    </subcellularLocation>
</comment>
<comment type="similarity">
    <text evidence="1">Belongs to the SLX1 family.</text>
</comment>
<evidence type="ECO:0000255" key="1">
    <source>
        <dbReference type="HAMAP-Rule" id="MF_03100"/>
    </source>
</evidence>
<proteinExistence type="inferred from homology"/>
<protein>
    <recommendedName>
        <fullName evidence="1">Structure-specific endonuclease subunit SLX1</fullName>
        <ecNumber evidence="1">3.1.-.-</ecNumber>
    </recommendedName>
</protein>
<keyword id="KW-0227">DNA damage</keyword>
<keyword id="KW-0233">DNA recombination</keyword>
<keyword id="KW-0234">DNA repair</keyword>
<keyword id="KW-0255">Endonuclease</keyword>
<keyword id="KW-0378">Hydrolase</keyword>
<keyword id="KW-0479">Metal-binding</keyword>
<keyword id="KW-0540">Nuclease</keyword>
<keyword id="KW-0539">Nucleus</keyword>
<keyword id="KW-1185">Reference proteome</keyword>
<keyword id="KW-0862">Zinc</keyword>
<keyword id="KW-0863">Zinc-finger</keyword>
<organism>
    <name type="scientific">Vanderwaltozyma polyspora (strain ATCC 22028 / DSM 70294 / BCRC 21397 / CBS 2163 / NBRC 10782 / NRRL Y-8283 / UCD 57-17)</name>
    <name type="common">Kluyveromyces polysporus</name>
    <dbReference type="NCBI Taxonomy" id="436907"/>
    <lineage>
        <taxon>Eukaryota</taxon>
        <taxon>Fungi</taxon>
        <taxon>Dikarya</taxon>
        <taxon>Ascomycota</taxon>
        <taxon>Saccharomycotina</taxon>
        <taxon>Saccharomycetes</taxon>
        <taxon>Saccharomycetales</taxon>
        <taxon>Saccharomycetaceae</taxon>
        <taxon>Vanderwaltozyma</taxon>
    </lineage>
</organism>
<gene>
    <name evidence="1" type="primary">SLX1</name>
    <name type="ORF">Kpol_223p3</name>
</gene>
<name>SLX1_VANPO</name>
<reference key="1">
    <citation type="journal article" date="2007" name="Proc. Natl. Acad. Sci. U.S.A.">
        <title>Independent sorting-out of thousands of duplicated gene pairs in two yeast species descended from a whole-genome duplication.</title>
        <authorList>
            <person name="Scannell D.R."/>
            <person name="Frank A.C."/>
            <person name="Conant G.C."/>
            <person name="Byrne K.P."/>
            <person name="Woolfit M."/>
            <person name="Wolfe K.H."/>
        </authorList>
    </citation>
    <scope>NUCLEOTIDE SEQUENCE [LARGE SCALE GENOMIC DNA]</scope>
    <source>
        <strain>ATCC 22028 / DSM 70294 / BCRC 21397 / CBS 2163 / NBRC 10782 / NRRL Y-8283 / UCD 57-17</strain>
    </source>
</reference>
<dbReference type="EC" id="3.1.-.-" evidence="1"/>
<dbReference type="EMBL" id="DS480564">
    <property type="protein sequence ID" value="EDO14460.1"/>
    <property type="molecule type" value="Genomic_DNA"/>
</dbReference>
<dbReference type="RefSeq" id="XP_001642318.1">
    <property type="nucleotide sequence ID" value="XM_001642268.1"/>
</dbReference>
<dbReference type="SMR" id="A7TTE6"/>
<dbReference type="FunCoup" id="A7TTE6">
    <property type="interactions" value="431"/>
</dbReference>
<dbReference type="STRING" id="436907.A7TTE6"/>
<dbReference type="GeneID" id="5542452"/>
<dbReference type="KEGG" id="vpo:Kpol_223p3"/>
<dbReference type="eggNOG" id="KOG3005">
    <property type="taxonomic scope" value="Eukaryota"/>
</dbReference>
<dbReference type="HOGENOM" id="CLU_030739_1_1_1"/>
<dbReference type="InParanoid" id="A7TTE6"/>
<dbReference type="OMA" id="INPREER"/>
<dbReference type="OrthoDB" id="24645at2759"/>
<dbReference type="PhylomeDB" id="A7TTE6"/>
<dbReference type="Proteomes" id="UP000000267">
    <property type="component" value="Unassembled WGS sequence"/>
</dbReference>
<dbReference type="GO" id="GO:0033557">
    <property type="term" value="C:Slx1-Slx4 complex"/>
    <property type="evidence" value="ECO:0007669"/>
    <property type="project" value="UniProtKB-UniRule"/>
</dbReference>
<dbReference type="GO" id="GO:0017108">
    <property type="term" value="F:5'-flap endonuclease activity"/>
    <property type="evidence" value="ECO:0007669"/>
    <property type="project" value="EnsemblFungi"/>
</dbReference>
<dbReference type="GO" id="GO:0008821">
    <property type="term" value="F:crossover junction DNA endonuclease activity"/>
    <property type="evidence" value="ECO:0007669"/>
    <property type="project" value="TreeGrafter"/>
</dbReference>
<dbReference type="GO" id="GO:0008270">
    <property type="term" value="F:zinc ion binding"/>
    <property type="evidence" value="ECO:0007669"/>
    <property type="project" value="UniProtKB-KW"/>
</dbReference>
<dbReference type="GO" id="GO:0006261">
    <property type="term" value="P:DNA-templated DNA replication"/>
    <property type="evidence" value="ECO:0007669"/>
    <property type="project" value="EnsemblFungi"/>
</dbReference>
<dbReference type="GO" id="GO:0000724">
    <property type="term" value="P:double-strand break repair via homologous recombination"/>
    <property type="evidence" value="ECO:0007669"/>
    <property type="project" value="TreeGrafter"/>
</dbReference>
<dbReference type="CDD" id="cd10455">
    <property type="entry name" value="GIY-YIG_SLX1"/>
    <property type="match status" value="1"/>
</dbReference>
<dbReference type="FunFam" id="3.40.1440.10:FF:000006">
    <property type="entry name" value="Structure-specific endonuclease subunit SLX1"/>
    <property type="match status" value="1"/>
</dbReference>
<dbReference type="Gene3D" id="3.40.1440.10">
    <property type="entry name" value="GIY-YIG endonuclease"/>
    <property type="match status" value="1"/>
</dbReference>
<dbReference type="Gene3D" id="3.30.40.10">
    <property type="entry name" value="Zinc/RING finger domain, C3HC4 (zinc finger)"/>
    <property type="match status" value="1"/>
</dbReference>
<dbReference type="HAMAP" id="MF_03100">
    <property type="entry name" value="Endonuc_su_Slx1"/>
    <property type="match status" value="1"/>
</dbReference>
<dbReference type="InterPro" id="IPR000305">
    <property type="entry name" value="GIY-YIG_endonuc"/>
</dbReference>
<dbReference type="InterPro" id="IPR035901">
    <property type="entry name" value="GIY-YIG_endonuc_sf"/>
</dbReference>
<dbReference type="InterPro" id="IPR027520">
    <property type="entry name" value="Slx1"/>
</dbReference>
<dbReference type="InterPro" id="IPR048749">
    <property type="entry name" value="SLX1_C"/>
</dbReference>
<dbReference type="InterPro" id="IPR050381">
    <property type="entry name" value="SLX1_endonuclease"/>
</dbReference>
<dbReference type="InterPro" id="IPR013083">
    <property type="entry name" value="Znf_RING/FYVE/PHD"/>
</dbReference>
<dbReference type="PANTHER" id="PTHR20208">
    <property type="entry name" value="STRUCTURE-SPECIFIC ENDONUCLEASE SUBUNIT SLX1"/>
    <property type="match status" value="1"/>
</dbReference>
<dbReference type="PANTHER" id="PTHR20208:SF10">
    <property type="entry name" value="STRUCTURE-SPECIFIC ENDONUCLEASE SUBUNIT SLX1"/>
    <property type="match status" value="1"/>
</dbReference>
<dbReference type="Pfam" id="PF01541">
    <property type="entry name" value="GIY-YIG"/>
    <property type="match status" value="1"/>
</dbReference>
<dbReference type="Pfam" id="PF21202">
    <property type="entry name" value="SLX1_C"/>
    <property type="match status" value="1"/>
</dbReference>
<dbReference type="SMART" id="SM00465">
    <property type="entry name" value="GIYc"/>
    <property type="match status" value="1"/>
</dbReference>
<dbReference type="SUPFAM" id="SSF82771">
    <property type="entry name" value="GIY-YIG endonuclease"/>
    <property type="match status" value="1"/>
</dbReference>
<dbReference type="PROSITE" id="PS50164">
    <property type="entry name" value="GIY_YIG"/>
    <property type="match status" value="1"/>
</dbReference>
<feature type="chain" id="PRO_0000383802" description="Structure-specific endonuclease subunit SLX1">
    <location>
        <begin position="1"/>
        <end position="319"/>
    </location>
</feature>
<feature type="domain" description="GIY-YIG" evidence="1">
    <location>
        <begin position="20"/>
        <end position="103"/>
    </location>
</feature>
<feature type="zinc finger region" description="SLX1-type" evidence="1">
    <location>
        <begin position="233"/>
        <end position="297"/>
    </location>
</feature>